<name>KVD17_HUMAN</name>
<gene>
    <name evidence="4 9" type="primary">IGKV1D-17</name>
</gene>
<organism>
    <name type="scientific">Homo sapiens</name>
    <name type="common">Human</name>
    <dbReference type="NCBI Taxonomy" id="9606"/>
    <lineage>
        <taxon>Eukaryota</taxon>
        <taxon>Metazoa</taxon>
        <taxon>Chordata</taxon>
        <taxon>Craniata</taxon>
        <taxon>Vertebrata</taxon>
        <taxon>Euteleostomi</taxon>
        <taxon>Mammalia</taxon>
        <taxon>Eutheria</taxon>
        <taxon>Euarchontoglires</taxon>
        <taxon>Primates</taxon>
        <taxon>Haplorrhini</taxon>
        <taxon>Catarrhini</taxon>
        <taxon>Hominidae</taxon>
        <taxon>Homo</taxon>
    </lineage>
</organism>
<dbReference type="EMBL" id="AC243981">
    <property type="status" value="NOT_ANNOTATED_CDS"/>
    <property type="molecule type" value="Genomic_DNA"/>
</dbReference>
<dbReference type="EMBL" id="AC245506">
    <property type="status" value="NOT_ANNOTATED_CDS"/>
    <property type="molecule type" value="Genomic_DNA"/>
</dbReference>
<dbReference type="SMR" id="A0A075B6S4"/>
<dbReference type="FunCoup" id="A0A075B6S4">
    <property type="interactions" value="283"/>
</dbReference>
<dbReference type="IMGT_GENE-DB" id="IGKV1D-17"/>
<dbReference type="BioMuta" id="IGKV1D-17"/>
<dbReference type="jPOST" id="A0A075B6S4"/>
<dbReference type="MassIVE" id="A0A075B6S4"/>
<dbReference type="Ensembl" id="ENST00000483379.1">
    <property type="protein sequence ID" value="ENSP00000418292.1"/>
    <property type="gene ID" value="ENSG00000242766.1"/>
</dbReference>
<dbReference type="UCSC" id="uc061lrw.1">
    <property type="organism name" value="human"/>
</dbReference>
<dbReference type="AGR" id="HGNC:5749"/>
<dbReference type="GeneCards" id="IGKV1D-17"/>
<dbReference type="HGNC" id="HGNC:5749">
    <property type="gene designation" value="IGKV1D-17"/>
</dbReference>
<dbReference type="HPA" id="ENSG00000242766">
    <property type="expression patterns" value="Group enriched (intestine, lymphoid tissue)"/>
</dbReference>
<dbReference type="neXtProt" id="NX_A0A075B6S4"/>
<dbReference type="OpenTargets" id="ENSG00000242766"/>
<dbReference type="VEuPathDB" id="HostDB:ENSG00000242766"/>
<dbReference type="GeneTree" id="ENSGT00940000153048"/>
<dbReference type="HOGENOM" id="CLU_077975_4_1_1"/>
<dbReference type="InParanoid" id="A0A075B6S4"/>
<dbReference type="OMA" id="PGARCNI"/>
<dbReference type="OrthoDB" id="9629570at2759"/>
<dbReference type="PAN-GO" id="A0A075B6S4">
    <property type="GO annotations" value="3 GO annotations based on evolutionary models"/>
</dbReference>
<dbReference type="PhylomeDB" id="A0A075B6S4"/>
<dbReference type="SignaLink" id="A0A075B6S4"/>
<dbReference type="Pharos" id="A0A075B6S4">
    <property type="development level" value="Tdark"/>
</dbReference>
<dbReference type="PRO" id="PR:A0A075B6S4"/>
<dbReference type="Proteomes" id="UP000005640">
    <property type="component" value="Chromosome 2"/>
</dbReference>
<dbReference type="RNAct" id="A0A075B6S4">
    <property type="molecule type" value="protein"/>
</dbReference>
<dbReference type="Bgee" id="ENSG00000242766">
    <property type="expression patterns" value="Expressed in mucosa of transverse colon and 65 other cell types or tissues"/>
</dbReference>
<dbReference type="GO" id="GO:0005576">
    <property type="term" value="C:extracellular region"/>
    <property type="evidence" value="ECO:0007669"/>
    <property type="project" value="UniProtKB-SubCell"/>
</dbReference>
<dbReference type="GO" id="GO:0019814">
    <property type="term" value="C:immunoglobulin complex"/>
    <property type="evidence" value="ECO:0000318"/>
    <property type="project" value="GO_Central"/>
</dbReference>
<dbReference type="GO" id="GO:0005886">
    <property type="term" value="C:plasma membrane"/>
    <property type="evidence" value="ECO:0007669"/>
    <property type="project" value="UniProtKB-SubCell"/>
</dbReference>
<dbReference type="GO" id="GO:0002250">
    <property type="term" value="P:adaptive immune response"/>
    <property type="evidence" value="ECO:0007669"/>
    <property type="project" value="UniProtKB-KW"/>
</dbReference>
<dbReference type="GO" id="GO:0006955">
    <property type="term" value="P:immune response"/>
    <property type="evidence" value="ECO:0000318"/>
    <property type="project" value="GO_Central"/>
</dbReference>
<dbReference type="CDD" id="cd04980">
    <property type="entry name" value="IgV_L_kappa"/>
    <property type="match status" value="1"/>
</dbReference>
<dbReference type="FunFam" id="2.60.40.10:FF:000212">
    <property type="entry name" value="Immunoglobulin kappa chain variable 12-38"/>
    <property type="match status" value="1"/>
</dbReference>
<dbReference type="Gene3D" id="2.60.40.10">
    <property type="entry name" value="Immunoglobulins"/>
    <property type="match status" value="1"/>
</dbReference>
<dbReference type="InterPro" id="IPR007110">
    <property type="entry name" value="Ig-like_dom"/>
</dbReference>
<dbReference type="InterPro" id="IPR036179">
    <property type="entry name" value="Ig-like_dom_sf"/>
</dbReference>
<dbReference type="InterPro" id="IPR013783">
    <property type="entry name" value="Ig-like_fold"/>
</dbReference>
<dbReference type="InterPro" id="IPR003599">
    <property type="entry name" value="Ig_sub"/>
</dbReference>
<dbReference type="InterPro" id="IPR013106">
    <property type="entry name" value="Ig_V-set"/>
</dbReference>
<dbReference type="InterPro" id="IPR050150">
    <property type="entry name" value="IgV_Light_Chain"/>
</dbReference>
<dbReference type="PANTHER" id="PTHR23267">
    <property type="entry name" value="IMMUNOGLOBULIN LIGHT CHAIN"/>
    <property type="match status" value="1"/>
</dbReference>
<dbReference type="Pfam" id="PF07686">
    <property type="entry name" value="V-set"/>
    <property type="match status" value="1"/>
</dbReference>
<dbReference type="SMART" id="SM00409">
    <property type="entry name" value="IG"/>
    <property type="match status" value="1"/>
</dbReference>
<dbReference type="SMART" id="SM00406">
    <property type="entry name" value="IGv"/>
    <property type="match status" value="1"/>
</dbReference>
<dbReference type="SUPFAM" id="SSF48726">
    <property type="entry name" value="Immunoglobulin"/>
    <property type="match status" value="1"/>
</dbReference>
<dbReference type="PROSITE" id="PS50835">
    <property type="entry name" value="IG_LIKE"/>
    <property type="match status" value="1"/>
</dbReference>
<protein>
    <recommendedName>
        <fullName evidence="4 9">Immunoglobulin kappa variable 1D-17</fullName>
    </recommendedName>
</protein>
<proteinExistence type="evidence at protein level"/>
<accession>A0A075B6S4</accession>
<comment type="function">
    <text evidence="5 6 7 8">V region of the variable domain of immunoglobulin light chains that participates in the antigen recognition (PubMed:24600447). Immunoglobulins, also known as antibodies, are membrane-bound or secreted glycoproteins produced by B lymphocytes. In the recognition phase of humoral immunity, the membrane-bound immunoglobulins serve as receptors which, upon binding of a specific antigen, trigger the clonal expansion and differentiation of B lymphocytes into immunoglobulins-secreting plasma cells. Secreted immunoglobulins mediate the effector phase of humoral immunity, which results in the elimination of bound antigens (PubMed:20176268, PubMed:22158414). The antigen binding site is formed by the variable domain of one heavy chain, together with that of its associated light chain. Thus, each immunoglobulin has two antigen binding sites with remarkable affinity for a particular antigen. The variable domains are assembled by a process called V-(D)-J rearrangement and can then be subjected to somatic hypermutations which, after exposure to antigen and selection, allow affinity maturation for a particular antigen (PubMed:17576170, PubMed:20176268).</text>
</comment>
<comment type="subunit">
    <text evidence="6">Immunoglobulins are composed of two identical heavy chains and two identical light chains; disulfide-linked.</text>
</comment>
<comment type="subcellular location">
    <subcellularLocation>
        <location evidence="6 7">Secreted</location>
    </subcellularLocation>
    <subcellularLocation>
        <location evidence="6 7">Cell membrane</location>
    </subcellularLocation>
</comment>
<comment type="polymorphism">
    <text>There are several alleles. The sequence shown is that of IMGT allele IGKV1D-17*01.</text>
</comment>
<comment type="caution">
    <text evidence="10">For an example of a full-length immunoglobulin kappa light chain see AC P0DOX7.</text>
</comment>
<reference key="1">
    <citation type="journal article" date="2005" name="Nature">
        <title>Generation and annotation of the DNA sequences of human chromosomes 2 and 4.</title>
        <authorList>
            <person name="Hillier L.W."/>
            <person name="Graves T.A."/>
            <person name="Fulton R.S."/>
            <person name="Fulton L.A."/>
            <person name="Pepin K.H."/>
            <person name="Minx P."/>
            <person name="Wagner-McPherson C."/>
            <person name="Layman D."/>
            <person name="Wylie K."/>
            <person name="Sekhon M."/>
            <person name="Becker M.C."/>
            <person name="Fewell G.A."/>
            <person name="Delehaunty K.D."/>
            <person name="Miner T.L."/>
            <person name="Nash W.E."/>
            <person name="Kremitzki C."/>
            <person name="Oddy L."/>
            <person name="Du H."/>
            <person name="Sun H."/>
            <person name="Bradshaw-Cordum H."/>
            <person name="Ali J."/>
            <person name="Carter J."/>
            <person name="Cordes M."/>
            <person name="Harris A."/>
            <person name="Isak A."/>
            <person name="van Brunt A."/>
            <person name="Nguyen C."/>
            <person name="Du F."/>
            <person name="Courtney L."/>
            <person name="Kalicki J."/>
            <person name="Ozersky P."/>
            <person name="Abbott S."/>
            <person name="Armstrong J."/>
            <person name="Belter E.A."/>
            <person name="Caruso L."/>
            <person name="Cedroni M."/>
            <person name="Cotton M."/>
            <person name="Davidson T."/>
            <person name="Desai A."/>
            <person name="Elliott G."/>
            <person name="Erb T."/>
            <person name="Fronick C."/>
            <person name="Gaige T."/>
            <person name="Haakenson W."/>
            <person name="Haglund K."/>
            <person name="Holmes A."/>
            <person name="Harkins R."/>
            <person name="Kim K."/>
            <person name="Kruchowski S.S."/>
            <person name="Strong C.M."/>
            <person name="Grewal N."/>
            <person name="Goyea E."/>
            <person name="Hou S."/>
            <person name="Levy A."/>
            <person name="Martinka S."/>
            <person name="Mead K."/>
            <person name="McLellan M.D."/>
            <person name="Meyer R."/>
            <person name="Randall-Maher J."/>
            <person name="Tomlinson C."/>
            <person name="Dauphin-Kohlberg S."/>
            <person name="Kozlowicz-Reilly A."/>
            <person name="Shah N."/>
            <person name="Swearengen-Shahid S."/>
            <person name="Snider J."/>
            <person name="Strong J.T."/>
            <person name="Thompson J."/>
            <person name="Yoakum M."/>
            <person name="Leonard S."/>
            <person name="Pearman C."/>
            <person name="Trani L."/>
            <person name="Radionenko M."/>
            <person name="Waligorski J.E."/>
            <person name="Wang C."/>
            <person name="Rock S.M."/>
            <person name="Tin-Wollam A.-M."/>
            <person name="Maupin R."/>
            <person name="Latreille P."/>
            <person name="Wendl M.C."/>
            <person name="Yang S.-P."/>
            <person name="Pohl C."/>
            <person name="Wallis J.W."/>
            <person name="Spieth J."/>
            <person name="Bieri T.A."/>
            <person name="Berkowicz N."/>
            <person name="Nelson J.O."/>
            <person name="Osborne J."/>
            <person name="Ding L."/>
            <person name="Meyer R."/>
            <person name="Sabo A."/>
            <person name="Shotland Y."/>
            <person name="Sinha P."/>
            <person name="Wohldmann P.E."/>
            <person name="Cook L.L."/>
            <person name="Hickenbotham M.T."/>
            <person name="Eldred J."/>
            <person name="Williams D."/>
            <person name="Jones T.A."/>
            <person name="She X."/>
            <person name="Ciccarelli F.D."/>
            <person name="Izaurralde E."/>
            <person name="Taylor J."/>
            <person name="Schmutz J."/>
            <person name="Myers R.M."/>
            <person name="Cox D.R."/>
            <person name="Huang X."/>
            <person name="McPherson J.D."/>
            <person name="Mardis E.R."/>
            <person name="Clifton S.W."/>
            <person name="Warren W.C."/>
            <person name="Chinwalla A.T."/>
            <person name="Eddy S.R."/>
            <person name="Marra M.A."/>
            <person name="Ovcharenko I."/>
            <person name="Furey T.S."/>
            <person name="Miller W."/>
            <person name="Eichler E.E."/>
            <person name="Bork P."/>
            <person name="Suyama M."/>
            <person name="Torrents D."/>
            <person name="Waterston R.H."/>
            <person name="Wilson R.K."/>
        </authorList>
    </citation>
    <scope>NUCLEOTIDE SEQUENCE [LARGE SCALE GENOMIC DNA] (IMGT ALLELE IGKV1D-17*01)</scope>
</reference>
<reference key="2">
    <citation type="journal article" date="2001" name="Exp. Clin. Immunogenet.">
        <title>Nomenclature of the human immunoglobulin kappa (IGK) genes.</title>
        <authorList>
            <person name="Lefranc M.P."/>
        </authorList>
    </citation>
    <scope>NOMEMCLATURE</scope>
</reference>
<reference key="3">
    <citation type="book" date="2001" name="The Immunoglobulin FactsBook.">
        <title>The Immunoglobulin FactsBook.</title>
        <editorList>
            <person name="Lefranc M.P."/>
            <person name="Lefranc G."/>
        </editorList>
        <authorList>
            <person name="Lefranc M.P."/>
            <person name="Lefranc G."/>
        </authorList>
    </citation>
    <scope>NOMENCLATURE</scope>
</reference>
<reference key="4">
    <citation type="journal article" date="2007" name="Annu. Rev. Genet.">
        <title>Immunoglobulin somatic hypermutation.</title>
        <authorList>
            <person name="Teng G."/>
            <person name="Papavasiliou F.N."/>
        </authorList>
    </citation>
    <scope>REVIEW ON SOMATIC HYPERMUTATION</scope>
</reference>
<reference key="5">
    <citation type="journal article" date="2010" name="J. Allergy Clin. Immunol.">
        <title>Structure and function of immunoglobulins.</title>
        <authorList>
            <person name="Schroeder H.W. Jr."/>
            <person name="Cavacini L."/>
        </authorList>
    </citation>
    <scope>REVIEW ON IMMUNOGLOBULINS</scope>
</reference>
<reference key="6">
    <citation type="journal article" date="2012" name="Nat. Rev. Immunol.">
        <title>Molecular programming of B cell memory.</title>
        <authorList>
            <person name="McHeyzer-Williams M."/>
            <person name="Okitsu S."/>
            <person name="Wang N."/>
            <person name="McHeyzer-Williams L."/>
        </authorList>
    </citation>
    <scope>REVIEW ON FUNCTION</scope>
</reference>
<reference key="7">
    <citation type="journal article" date="2014" name="Front. Immunol.">
        <title>Immunoglobulin and T Cell Receptor Genes: IMGT((R)) and the Birth and Rise of Immunoinformatics.</title>
        <authorList>
            <person name="Lefranc M.P."/>
        </authorList>
    </citation>
    <scope>NOMENCLATURE</scope>
</reference>
<keyword id="KW-1064">Adaptive immunity</keyword>
<keyword id="KW-1003">Cell membrane</keyword>
<keyword id="KW-1015">Disulfide bond</keyword>
<keyword id="KW-0391">Immunity</keyword>
<keyword id="KW-1280">Immunoglobulin</keyword>
<keyword id="KW-0393">Immunoglobulin domain</keyword>
<keyword id="KW-0472">Membrane</keyword>
<keyword id="KW-1267">Proteomics identification</keyword>
<keyword id="KW-1185">Reference proteome</keyword>
<keyword id="KW-0964">Secreted</keyword>
<keyword id="KW-0732">Signal</keyword>
<sequence>MDMRVPAQLLGLLLLWFPGARCNIQMTQSPSAMSASVGDRVTITCRARQGISNYLAWFQQKPGKVPKHLIYAASSLQSGVPSRFSGSGSGTEFTLTISSLQPEDFATYYCLQHNSYP</sequence>
<evidence type="ECO:0000250" key="1">
    <source>
        <dbReference type="UniProtKB" id="P01602"/>
    </source>
</evidence>
<evidence type="ECO:0000255" key="2"/>
<evidence type="ECO:0000255" key="3">
    <source>
        <dbReference type="PROSITE-ProRule" id="PRU00114"/>
    </source>
</evidence>
<evidence type="ECO:0000303" key="4">
    <source>
    </source>
</evidence>
<evidence type="ECO:0000303" key="5">
    <source>
    </source>
</evidence>
<evidence type="ECO:0000303" key="6">
    <source>
    </source>
</evidence>
<evidence type="ECO:0000303" key="7">
    <source>
    </source>
</evidence>
<evidence type="ECO:0000303" key="8">
    <source>
    </source>
</evidence>
<evidence type="ECO:0000303" key="9">
    <source ref="3"/>
</evidence>
<evidence type="ECO:0000305" key="10"/>
<feature type="signal peptide" evidence="2">
    <location>
        <begin position="1"/>
        <end position="22"/>
    </location>
</feature>
<feature type="chain" id="PRO_5001705776" description="Immunoglobulin kappa variable 1D-17" evidence="2">
    <location>
        <begin position="23"/>
        <end position="117"/>
    </location>
</feature>
<feature type="domain" description="Ig-like" evidence="3">
    <location>
        <begin position="23"/>
        <end position="117" status="greater than"/>
    </location>
</feature>
<feature type="region of interest" description="Framework-1" evidence="1">
    <location>
        <begin position="23"/>
        <end position="45"/>
    </location>
</feature>
<feature type="region of interest" description="Complementarity-determining-1" evidence="1">
    <location>
        <begin position="46"/>
        <end position="56"/>
    </location>
</feature>
<feature type="region of interest" description="Framework-2" evidence="1">
    <location>
        <begin position="57"/>
        <end position="71"/>
    </location>
</feature>
<feature type="region of interest" description="Complementarity-determining-2" evidence="1">
    <location>
        <begin position="72"/>
        <end position="78"/>
    </location>
</feature>
<feature type="region of interest" description="Framework-3" evidence="1">
    <location>
        <begin position="79"/>
        <end position="110"/>
    </location>
</feature>
<feature type="region of interest" description="Complementarity-determining-3" evidence="1">
    <location>
        <begin position="111"/>
        <end position="117" status="greater than"/>
    </location>
</feature>
<feature type="disulfide bond" evidence="3">
    <location>
        <begin position="45"/>
        <end position="110"/>
    </location>
</feature>
<feature type="non-terminal residue">
    <location>
        <position position="117"/>
    </location>
</feature>